<accession>B7JK56</accession>
<gene>
    <name evidence="1" type="primary">glmU</name>
    <name type="ordered locus">BCAH820_0055</name>
</gene>
<dbReference type="EC" id="2.7.7.23" evidence="1"/>
<dbReference type="EC" id="2.3.1.157" evidence="1"/>
<dbReference type="EMBL" id="CP001283">
    <property type="protein sequence ID" value="ACK88901.1"/>
    <property type="molecule type" value="Genomic_DNA"/>
</dbReference>
<dbReference type="RefSeq" id="WP_000071032.1">
    <property type="nucleotide sequence ID" value="NC_011773.1"/>
</dbReference>
<dbReference type="SMR" id="B7JK56"/>
<dbReference type="GeneID" id="45020089"/>
<dbReference type="KEGG" id="bcu:BCAH820_0055"/>
<dbReference type="HOGENOM" id="CLU_029499_15_2_9"/>
<dbReference type="UniPathway" id="UPA00113">
    <property type="reaction ID" value="UER00532"/>
</dbReference>
<dbReference type="UniPathway" id="UPA00113">
    <property type="reaction ID" value="UER00533"/>
</dbReference>
<dbReference type="UniPathway" id="UPA00973"/>
<dbReference type="Proteomes" id="UP000001363">
    <property type="component" value="Chromosome"/>
</dbReference>
<dbReference type="GO" id="GO:0005737">
    <property type="term" value="C:cytoplasm"/>
    <property type="evidence" value="ECO:0007669"/>
    <property type="project" value="UniProtKB-SubCell"/>
</dbReference>
<dbReference type="GO" id="GO:0016020">
    <property type="term" value="C:membrane"/>
    <property type="evidence" value="ECO:0007669"/>
    <property type="project" value="GOC"/>
</dbReference>
<dbReference type="GO" id="GO:0019134">
    <property type="term" value="F:glucosamine-1-phosphate N-acetyltransferase activity"/>
    <property type="evidence" value="ECO:0007669"/>
    <property type="project" value="UniProtKB-UniRule"/>
</dbReference>
<dbReference type="GO" id="GO:0000287">
    <property type="term" value="F:magnesium ion binding"/>
    <property type="evidence" value="ECO:0007669"/>
    <property type="project" value="UniProtKB-UniRule"/>
</dbReference>
<dbReference type="GO" id="GO:0003977">
    <property type="term" value="F:UDP-N-acetylglucosamine diphosphorylase activity"/>
    <property type="evidence" value="ECO:0007669"/>
    <property type="project" value="UniProtKB-UniRule"/>
</dbReference>
<dbReference type="GO" id="GO:0000902">
    <property type="term" value="P:cell morphogenesis"/>
    <property type="evidence" value="ECO:0007669"/>
    <property type="project" value="UniProtKB-UniRule"/>
</dbReference>
<dbReference type="GO" id="GO:0071555">
    <property type="term" value="P:cell wall organization"/>
    <property type="evidence" value="ECO:0007669"/>
    <property type="project" value="UniProtKB-KW"/>
</dbReference>
<dbReference type="GO" id="GO:0009245">
    <property type="term" value="P:lipid A biosynthetic process"/>
    <property type="evidence" value="ECO:0007669"/>
    <property type="project" value="UniProtKB-UniRule"/>
</dbReference>
<dbReference type="GO" id="GO:0009252">
    <property type="term" value="P:peptidoglycan biosynthetic process"/>
    <property type="evidence" value="ECO:0007669"/>
    <property type="project" value="UniProtKB-UniRule"/>
</dbReference>
<dbReference type="GO" id="GO:0008360">
    <property type="term" value="P:regulation of cell shape"/>
    <property type="evidence" value="ECO:0007669"/>
    <property type="project" value="UniProtKB-KW"/>
</dbReference>
<dbReference type="GO" id="GO:0006048">
    <property type="term" value="P:UDP-N-acetylglucosamine biosynthetic process"/>
    <property type="evidence" value="ECO:0007669"/>
    <property type="project" value="UniProtKB-UniPathway"/>
</dbReference>
<dbReference type="CDD" id="cd02540">
    <property type="entry name" value="GT2_GlmU_N_bac"/>
    <property type="match status" value="1"/>
</dbReference>
<dbReference type="CDD" id="cd03353">
    <property type="entry name" value="LbH_GlmU_C"/>
    <property type="match status" value="1"/>
</dbReference>
<dbReference type="FunFam" id="2.160.10.10:FF:000016">
    <property type="entry name" value="Bifunctional protein GlmU"/>
    <property type="match status" value="1"/>
</dbReference>
<dbReference type="FunFam" id="3.90.550.10:FF:000006">
    <property type="entry name" value="Bifunctional protein GlmU"/>
    <property type="match status" value="1"/>
</dbReference>
<dbReference type="Gene3D" id="2.160.10.10">
    <property type="entry name" value="Hexapeptide repeat proteins"/>
    <property type="match status" value="1"/>
</dbReference>
<dbReference type="Gene3D" id="3.90.550.10">
    <property type="entry name" value="Spore Coat Polysaccharide Biosynthesis Protein SpsA, Chain A"/>
    <property type="match status" value="1"/>
</dbReference>
<dbReference type="HAMAP" id="MF_01631">
    <property type="entry name" value="GlmU"/>
    <property type="match status" value="1"/>
</dbReference>
<dbReference type="InterPro" id="IPR005882">
    <property type="entry name" value="Bifunctional_GlmU"/>
</dbReference>
<dbReference type="InterPro" id="IPR050065">
    <property type="entry name" value="GlmU-like"/>
</dbReference>
<dbReference type="InterPro" id="IPR038009">
    <property type="entry name" value="GlmU_C_LbH"/>
</dbReference>
<dbReference type="InterPro" id="IPR001451">
    <property type="entry name" value="Hexapep"/>
</dbReference>
<dbReference type="InterPro" id="IPR018357">
    <property type="entry name" value="Hexapep_transf_CS"/>
</dbReference>
<dbReference type="InterPro" id="IPR005835">
    <property type="entry name" value="NTP_transferase_dom"/>
</dbReference>
<dbReference type="InterPro" id="IPR029044">
    <property type="entry name" value="Nucleotide-diphossugar_trans"/>
</dbReference>
<dbReference type="InterPro" id="IPR011004">
    <property type="entry name" value="Trimer_LpxA-like_sf"/>
</dbReference>
<dbReference type="NCBIfam" id="TIGR01173">
    <property type="entry name" value="glmU"/>
    <property type="match status" value="1"/>
</dbReference>
<dbReference type="NCBIfam" id="NF010934">
    <property type="entry name" value="PRK14354.1"/>
    <property type="match status" value="1"/>
</dbReference>
<dbReference type="PANTHER" id="PTHR43584:SF3">
    <property type="entry name" value="BIFUNCTIONAL PROTEIN GLMU"/>
    <property type="match status" value="1"/>
</dbReference>
<dbReference type="PANTHER" id="PTHR43584">
    <property type="entry name" value="NUCLEOTIDYL TRANSFERASE"/>
    <property type="match status" value="1"/>
</dbReference>
<dbReference type="Pfam" id="PF00132">
    <property type="entry name" value="Hexapep"/>
    <property type="match status" value="3"/>
</dbReference>
<dbReference type="Pfam" id="PF00483">
    <property type="entry name" value="NTP_transferase"/>
    <property type="match status" value="1"/>
</dbReference>
<dbReference type="SUPFAM" id="SSF53448">
    <property type="entry name" value="Nucleotide-diphospho-sugar transferases"/>
    <property type="match status" value="1"/>
</dbReference>
<dbReference type="SUPFAM" id="SSF51161">
    <property type="entry name" value="Trimeric LpxA-like enzymes"/>
    <property type="match status" value="1"/>
</dbReference>
<dbReference type="PROSITE" id="PS00101">
    <property type="entry name" value="HEXAPEP_TRANSFERASES"/>
    <property type="match status" value="1"/>
</dbReference>
<comment type="function">
    <text evidence="1">Catalyzes the last two sequential reactions in the de novo biosynthetic pathway for UDP-N-acetylglucosamine (UDP-GlcNAc). The C-terminal domain catalyzes the transfer of acetyl group from acetyl coenzyme A to glucosamine-1-phosphate (GlcN-1-P) to produce N-acetylglucosamine-1-phosphate (GlcNAc-1-P), which is converted into UDP-GlcNAc by the transfer of uridine 5-monophosphate (from uridine 5-triphosphate), a reaction catalyzed by the N-terminal domain.</text>
</comment>
<comment type="catalytic activity">
    <reaction evidence="1">
        <text>alpha-D-glucosamine 1-phosphate + acetyl-CoA = N-acetyl-alpha-D-glucosamine 1-phosphate + CoA + H(+)</text>
        <dbReference type="Rhea" id="RHEA:13725"/>
        <dbReference type="ChEBI" id="CHEBI:15378"/>
        <dbReference type="ChEBI" id="CHEBI:57287"/>
        <dbReference type="ChEBI" id="CHEBI:57288"/>
        <dbReference type="ChEBI" id="CHEBI:57776"/>
        <dbReference type="ChEBI" id="CHEBI:58516"/>
        <dbReference type="EC" id="2.3.1.157"/>
    </reaction>
</comment>
<comment type="catalytic activity">
    <reaction evidence="1">
        <text>N-acetyl-alpha-D-glucosamine 1-phosphate + UTP + H(+) = UDP-N-acetyl-alpha-D-glucosamine + diphosphate</text>
        <dbReference type="Rhea" id="RHEA:13509"/>
        <dbReference type="ChEBI" id="CHEBI:15378"/>
        <dbReference type="ChEBI" id="CHEBI:33019"/>
        <dbReference type="ChEBI" id="CHEBI:46398"/>
        <dbReference type="ChEBI" id="CHEBI:57705"/>
        <dbReference type="ChEBI" id="CHEBI:57776"/>
        <dbReference type="EC" id="2.7.7.23"/>
    </reaction>
</comment>
<comment type="cofactor">
    <cofactor evidence="1">
        <name>Mg(2+)</name>
        <dbReference type="ChEBI" id="CHEBI:18420"/>
    </cofactor>
    <text evidence="1">Binds 1 Mg(2+) ion per subunit.</text>
</comment>
<comment type="pathway">
    <text evidence="1">Nucleotide-sugar biosynthesis; UDP-N-acetyl-alpha-D-glucosamine biosynthesis; N-acetyl-alpha-D-glucosamine 1-phosphate from alpha-D-glucosamine 6-phosphate (route II): step 2/2.</text>
</comment>
<comment type="pathway">
    <text evidence="1">Nucleotide-sugar biosynthesis; UDP-N-acetyl-alpha-D-glucosamine biosynthesis; UDP-N-acetyl-alpha-D-glucosamine from N-acetyl-alpha-D-glucosamine 1-phosphate: step 1/1.</text>
</comment>
<comment type="pathway">
    <text evidence="1">Bacterial outer membrane biogenesis; LPS lipid A biosynthesis.</text>
</comment>
<comment type="subunit">
    <text evidence="1">Homotrimer.</text>
</comment>
<comment type="subcellular location">
    <subcellularLocation>
        <location evidence="1">Cytoplasm</location>
    </subcellularLocation>
</comment>
<comment type="similarity">
    <text evidence="1">In the N-terminal section; belongs to the N-acetylglucosamine-1-phosphate uridyltransferase family.</text>
</comment>
<comment type="similarity">
    <text evidence="1">In the C-terminal section; belongs to the transferase hexapeptide repeat family.</text>
</comment>
<proteinExistence type="inferred from homology"/>
<feature type="chain" id="PRO_1000186398" description="Bifunctional protein GlmU">
    <location>
        <begin position="1"/>
        <end position="459"/>
    </location>
</feature>
<feature type="region of interest" description="Pyrophosphorylase" evidence="1">
    <location>
        <begin position="1"/>
        <end position="230"/>
    </location>
</feature>
<feature type="region of interest" description="Linker" evidence="1">
    <location>
        <begin position="231"/>
        <end position="251"/>
    </location>
</feature>
<feature type="region of interest" description="N-acetyltransferase" evidence="1">
    <location>
        <begin position="252"/>
        <end position="459"/>
    </location>
</feature>
<feature type="active site" description="Proton acceptor" evidence="1">
    <location>
        <position position="363"/>
    </location>
</feature>
<feature type="binding site" evidence="1">
    <location>
        <begin position="9"/>
        <end position="12"/>
    </location>
    <ligand>
        <name>UDP-N-acetyl-alpha-D-glucosamine</name>
        <dbReference type="ChEBI" id="CHEBI:57705"/>
    </ligand>
</feature>
<feature type="binding site" evidence="1">
    <location>
        <position position="23"/>
    </location>
    <ligand>
        <name>UDP-N-acetyl-alpha-D-glucosamine</name>
        <dbReference type="ChEBI" id="CHEBI:57705"/>
    </ligand>
</feature>
<feature type="binding site" evidence="1">
    <location>
        <position position="73"/>
    </location>
    <ligand>
        <name>UDP-N-acetyl-alpha-D-glucosamine</name>
        <dbReference type="ChEBI" id="CHEBI:57705"/>
    </ligand>
</feature>
<feature type="binding site" evidence="1">
    <location>
        <begin position="78"/>
        <end position="79"/>
    </location>
    <ligand>
        <name>UDP-N-acetyl-alpha-D-glucosamine</name>
        <dbReference type="ChEBI" id="CHEBI:57705"/>
    </ligand>
</feature>
<feature type="binding site" evidence="1">
    <location>
        <position position="103"/>
    </location>
    <ligand>
        <name>Mg(2+)</name>
        <dbReference type="ChEBI" id="CHEBI:18420"/>
    </ligand>
</feature>
<feature type="binding site" evidence="1">
    <location>
        <position position="140"/>
    </location>
    <ligand>
        <name>UDP-N-acetyl-alpha-D-glucosamine</name>
        <dbReference type="ChEBI" id="CHEBI:57705"/>
    </ligand>
</feature>
<feature type="binding site" evidence="1">
    <location>
        <position position="155"/>
    </location>
    <ligand>
        <name>UDP-N-acetyl-alpha-D-glucosamine</name>
        <dbReference type="ChEBI" id="CHEBI:57705"/>
    </ligand>
</feature>
<feature type="binding site" evidence="1">
    <location>
        <position position="170"/>
    </location>
    <ligand>
        <name>UDP-N-acetyl-alpha-D-glucosamine</name>
        <dbReference type="ChEBI" id="CHEBI:57705"/>
    </ligand>
</feature>
<feature type="binding site" evidence="1">
    <location>
        <position position="228"/>
    </location>
    <ligand>
        <name>Mg(2+)</name>
        <dbReference type="ChEBI" id="CHEBI:18420"/>
    </ligand>
</feature>
<feature type="binding site" evidence="1">
    <location>
        <position position="228"/>
    </location>
    <ligand>
        <name>UDP-N-acetyl-alpha-D-glucosamine</name>
        <dbReference type="ChEBI" id="CHEBI:57705"/>
    </ligand>
</feature>
<feature type="binding site" evidence="1">
    <location>
        <position position="333"/>
    </location>
    <ligand>
        <name>UDP-N-acetyl-alpha-D-glucosamine</name>
        <dbReference type="ChEBI" id="CHEBI:57705"/>
    </ligand>
</feature>
<feature type="binding site" evidence="1">
    <location>
        <position position="351"/>
    </location>
    <ligand>
        <name>UDP-N-acetyl-alpha-D-glucosamine</name>
        <dbReference type="ChEBI" id="CHEBI:57705"/>
    </ligand>
</feature>
<feature type="binding site" evidence="1">
    <location>
        <position position="366"/>
    </location>
    <ligand>
        <name>UDP-N-acetyl-alpha-D-glucosamine</name>
        <dbReference type="ChEBI" id="CHEBI:57705"/>
    </ligand>
</feature>
<feature type="binding site" evidence="1">
    <location>
        <position position="377"/>
    </location>
    <ligand>
        <name>UDP-N-acetyl-alpha-D-glucosamine</name>
        <dbReference type="ChEBI" id="CHEBI:57705"/>
    </ligand>
</feature>
<feature type="binding site" evidence="1">
    <location>
        <begin position="386"/>
        <end position="387"/>
    </location>
    <ligand>
        <name>acetyl-CoA</name>
        <dbReference type="ChEBI" id="CHEBI:57288"/>
    </ligand>
</feature>
<feature type="binding site" evidence="1">
    <location>
        <position position="423"/>
    </location>
    <ligand>
        <name>acetyl-CoA</name>
        <dbReference type="ChEBI" id="CHEBI:57288"/>
    </ligand>
</feature>
<feature type="binding site" evidence="1">
    <location>
        <position position="440"/>
    </location>
    <ligand>
        <name>acetyl-CoA</name>
        <dbReference type="ChEBI" id="CHEBI:57288"/>
    </ligand>
</feature>
<protein>
    <recommendedName>
        <fullName evidence="1">Bifunctional protein GlmU</fullName>
    </recommendedName>
    <domain>
        <recommendedName>
            <fullName evidence="1">UDP-N-acetylglucosamine pyrophosphorylase</fullName>
            <ecNumber evidence="1">2.7.7.23</ecNumber>
        </recommendedName>
        <alternativeName>
            <fullName evidence="1">N-acetylglucosamine-1-phosphate uridyltransferase</fullName>
        </alternativeName>
    </domain>
    <domain>
        <recommendedName>
            <fullName evidence="1">Glucosamine-1-phosphate N-acetyltransferase</fullName>
            <ecNumber evidence="1">2.3.1.157</ecNumber>
        </recommendedName>
    </domain>
</protein>
<organism>
    <name type="scientific">Bacillus cereus (strain AH820)</name>
    <dbReference type="NCBI Taxonomy" id="405535"/>
    <lineage>
        <taxon>Bacteria</taxon>
        <taxon>Bacillati</taxon>
        <taxon>Bacillota</taxon>
        <taxon>Bacilli</taxon>
        <taxon>Bacillales</taxon>
        <taxon>Bacillaceae</taxon>
        <taxon>Bacillus</taxon>
        <taxon>Bacillus cereus group</taxon>
    </lineage>
</organism>
<evidence type="ECO:0000255" key="1">
    <source>
        <dbReference type="HAMAP-Rule" id="MF_01631"/>
    </source>
</evidence>
<reference key="1">
    <citation type="submission" date="2008-10" db="EMBL/GenBank/DDBJ databases">
        <title>Genome sequence of Bacillus cereus AH820.</title>
        <authorList>
            <person name="Dodson R.J."/>
            <person name="Durkin A.S."/>
            <person name="Rosovitz M.J."/>
            <person name="Rasko D.A."/>
            <person name="Hoffmaster A."/>
            <person name="Ravel J."/>
            <person name="Sutton G."/>
        </authorList>
    </citation>
    <scope>NUCLEOTIDE SEQUENCE [LARGE SCALE GENOMIC DNA]</scope>
    <source>
        <strain>AH820</strain>
    </source>
</reference>
<sequence length="459" mass="49423">MSNRFAVILAAGKGTRMKSKLYKVLHPVCGKPMVQHVVDQVSQLGLQKLVTVVGHGAEMVQEQLGNVSEFALQAEQLGTAHAVDQAAGVLANEEGTTLVICGDTPLITAETMEALLQQHKEAGAMATVLTAYIEEPAGYGRIVRNENGHVEKIVEHKDANEKELAIKEINTGTYCFDNKALFASLSKVSNDNVQGEYYLPDVIEILKNEGHIVSAYQTEHFDETLGVNDRVALSQAEIIMKNRINRKNMVNGVTIIDPSNTYISADAIIGSDTVLHPGTIIEGNTVIGSDCEIGPHTVIRDSEIGDRTTIRQSTVHDSKLGTEVSVGPFAHIRPDSVIGDEVRVGNFVEIKKTVFGNRSKASHLSYIGDAQVGEDVNLGCGSITVNYDGKNKFKTVIGNGVFIGCNSNLVAPVTVEDGAYVAAGSTITENVPSKALSVARARQVNKEDYVDQLLNKKKS</sequence>
<name>GLMU_BACC0</name>
<keyword id="KW-0012">Acyltransferase</keyword>
<keyword id="KW-0133">Cell shape</keyword>
<keyword id="KW-0961">Cell wall biogenesis/degradation</keyword>
<keyword id="KW-0963">Cytoplasm</keyword>
<keyword id="KW-0460">Magnesium</keyword>
<keyword id="KW-0479">Metal-binding</keyword>
<keyword id="KW-0511">Multifunctional enzyme</keyword>
<keyword id="KW-0548">Nucleotidyltransferase</keyword>
<keyword id="KW-0573">Peptidoglycan synthesis</keyword>
<keyword id="KW-0677">Repeat</keyword>
<keyword id="KW-0808">Transferase</keyword>